<evidence type="ECO:0000250" key="1">
    <source>
        <dbReference type="UniProtKB" id="Q68FF7"/>
    </source>
</evidence>
<evidence type="ECO:0000255" key="2"/>
<evidence type="ECO:0000256" key="3">
    <source>
        <dbReference type="SAM" id="MobiDB-lite"/>
    </source>
</evidence>
<evidence type="ECO:0000269" key="4">
    <source>
    </source>
</evidence>
<evidence type="ECO:0000269" key="5">
    <source>
    </source>
</evidence>
<evidence type="ECO:0000269" key="6">
    <source>
    </source>
</evidence>
<evidence type="ECO:0000303" key="7">
    <source>
    </source>
</evidence>
<evidence type="ECO:0000303" key="8">
    <source>
    </source>
</evidence>
<evidence type="ECO:0000305" key="9"/>
<evidence type="ECO:0007744" key="10">
    <source>
    </source>
</evidence>
<organism>
    <name type="scientific">Homo sapiens</name>
    <name type="common">Human</name>
    <dbReference type="NCBI Taxonomy" id="9606"/>
    <lineage>
        <taxon>Eukaryota</taxon>
        <taxon>Metazoa</taxon>
        <taxon>Chordata</taxon>
        <taxon>Craniata</taxon>
        <taxon>Vertebrata</taxon>
        <taxon>Euteleostomi</taxon>
        <taxon>Mammalia</taxon>
        <taxon>Eutheria</taxon>
        <taxon>Euarchontoglires</taxon>
        <taxon>Primates</taxon>
        <taxon>Haplorrhini</taxon>
        <taxon>Catarrhini</taxon>
        <taxon>Hominidae</taxon>
        <taxon>Homo</taxon>
    </lineage>
</organism>
<feature type="chain" id="PRO_0000316962" description="SLAIN motif-containing protein 1">
    <location>
        <begin position="1"/>
        <end position="568"/>
    </location>
</feature>
<feature type="region of interest" description="Disordered" evidence="3">
    <location>
        <begin position="1"/>
        <end position="22"/>
    </location>
</feature>
<feature type="region of interest" description="Disordered" evidence="3">
    <location>
        <begin position="59"/>
        <end position="92"/>
    </location>
</feature>
<feature type="region of interest" description="Disordered" evidence="3">
    <location>
        <begin position="139"/>
        <end position="162"/>
    </location>
</feature>
<feature type="region of interest" description="Disordered" evidence="3">
    <location>
        <begin position="235"/>
        <end position="256"/>
    </location>
</feature>
<feature type="region of interest" description="Disordered" evidence="3">
    <location>
        <begin position="291"/>
        <end position="403"/>
    </location>
</feature>
<feature type="coiled-coil region" evidence="2">
    <location>
        <begin position="21"/>
        <end position="56"/>
    </location>
</feature>
<feature type="compositionally biased region" description="Pro residues" evidence="3">
    <location>
        <begin position="62"/>
        <end position="74"/>
    </location>
</feature>
<feature type="compositionally biased region" description="Low complexity" evidence="3">
    <location>
        <begin position="75"/>
        <end position="92"/>
    </location>
</feature>
<feature type="compositionally biased region" description="Gly residues" evidence="3">
    <location>
        <begin position="139"/>
        <end position="149"/>
    </location>
</feature>
<feature type="compositionally biased region" description="Polar residues" evidence="3">
    <location>
        <begin position="235"/>
        <end position="245"/>
    </location>
</feature>
<feature type="compositionally biased region" description="Low complexity" evidence="3">
    <location>
        <begin position="246"/>
        <end position="255"/>
    </location>
</feature>
<feature type="compositionally biased region" description="Low complexity" evidence="3">
    <location>
        <begin position="291"/>
        <end position="307"/>
    </location>
</feature>
<feature type="compositionally biased region" description="Acidic residues" evidence="3">
    <location>
        <begin position="316"/>
        <end position="329"/>
    </location>
</feature>
<feature type="compositionally biased region" description="Low complexity" evidence="3">
    <location>
        <begin position="366"/>
        <end position="384"/>
    </location>
</feature>
<feature type="compositionally biased region" description="Polar residues" evidence="3">
    <location>
        <begin position="385"/>
        <end position="395"/>
    </location>
</feature>
<feature type="modified residue" description="Phosphoserine" evidence="10">
    <location>
        <position position="243"/>
    </location>
</feature>
<feature type="modified residue" description="Asymmetric dimethylarginine" evidence="1">
    <location>
        <position position="471"/>
    </location>
</feature>
<feature type="modified residue" description="Asymmetric dimethylarginine" evidence="1">
    <location>
        <position position="543"/>
    </location>
</feature>
<feature type="splice variant" id="VSP_030832" description="In isoform 2 and isoform 3." evidence="7 8">
    <location>
        <begin position="1"/>
        <end position="263"/>
    </location>
</feature>
<feature type="splice variant" id="VSP_054118" description="In isoform 4." evidence="7">
    <original>MMAEQVKCASAGVSSGAGSGPVVNAELEVKKLQELVRKLEKQNEQLRSRAASAAAAPHLLLLPPPPPAAPPPAGLQPLGPRSPPAATATAAASGGLGPAFPGTFCLPSPAPSLLCSLAQPPEAPFVYFKPAAGFFGAGGGGPEPGGAGTPPGAAAAPPSPPPTLLDEVELLDLESVAAWRDEDDYTW</original>
    <variation>MVGVGLCLRLLLFFRFKRTLDRICVLFLLGWHRKPRSDGSLFIER</variation>
    <location>
        <begin position="1"/>
        <end position="187"/>
    </location>
</feature>
<feature type="splice variant" id="VSP_043256" description="In isoform 3." evidence="7 8">
    <location>
        <begin position="284"/>
        <end position="397"/>
    </location>
</feature>
<feature type="splice variant" id="VSP_043257" description="In isoform 3." evidence="7 8">
    <original>D</original>
    <variation>N</variation>
    <location>
        <position position="398"/>
    </location>
</feature>
<feature type="sequence conflict" description="In Ref. 1; BAF82403." evidence="9" ref="1">
    <original>K</original>
    <variation>R</variation>
    <location>
        <position position="399"/>
    </location>
</feature>
<proteinExistence type="evidence at protein level"/>
<dbReference type="EMBL" id="AK054608">
    <property type="protein sequence ID" value="BAB70772.1"/>
    <property type="molecule type" value="mRNA"/>
</dbReference>
<dbReference type="EMBL" id="AK289600">
    <property type="protein sequence ID" value="BAF82289.1"/>
    <property type="molecule type" value="mRNA"/>
</dbReference>
<dbReference type="EMBL" id="AK289714">
    <property type="protein sequence ID" value="BAF82403.1"/>
    <property type="molecule type" value="mRNA"/>
</dbReference>
<dbReference type="EMBL" id="AK294201">
    <property type="protein sequence ID" value="BAH11695.1"/>
    <property type="molecule type" value="mRNA"/>
</dbReference>
<dbReference type="EMBL" id="AL834203">
    <property type="protein sequence ID" value="CAD38891.1"/>
    <property type="molecule type" value="mRNA"/>
</dbReference>
<dbReference type="EMBL" id="AL834332">
    <property type="protein sequence ID" value="CAD39000.2"/>
    <property type="status" value="ALT_INIT"/>
    <property type="molecule type" value="mRNA"/>
</dbReference>
<dbReference type="EMBL" id="AL354831">
    <property type="status" value="NOT_ANNOTATED_CDS"/>
    <property type="molecule type" value="Genomic_DNA"/>
</dbReference>
<dbReference type="EMBL" id="BC111497">
    <property type="protein sequence ID" value="AAI11498.1"/>
    <property type="status" value="ALT_INIT"/>
    <property type="molecule type" value="mRNA"/>
</dbReference>
<dbReference type="CCDS" id="CCDS31995.2">
    <molecule id="Q8ND83-4"/>
</dbReference>
<dbReference type="CCDS" id="CCDS55901.1">
    <molecule id="Q8ND83-3"/>
</dbReference>
<dbReference type="CCDS" id="CCDS9460.1">
    <molecule id="Q8ND83-2"/>
</dbReference>
<dbReference type="RefSeq" id="NP_001035243.2">
    <molecule id="Q8ND83-4"/>
    <property type="nucleotide sequence ID" value="NM_001040153.4"/>
</dbReference>
<dbReference type="RefSeq" id="NP_001229798.1">
    <molecule id="Q8ND83-3"/>
    <property type="nucleotide sequence ID" value="NM_001242869.2"/>
</dbReference>
<dbReference type="RefSeq" id="NP_001229799.1">
    <molecule id="Q8ND83-3"/>
    <property type="nucleotide sequence ID" value="NM_001242870.2"/>
</dbReference>
<dbReference type="RefSeq" id="NP_001353595.1">
    <molecule id="Q8ND83-2"/>
    <property type="nucleotide sequence ID" value="NM_001366666.1"/>
</dbReference>
<dbReference type="RefSeq" id="NP_653196.1">
    <molecule id="Q8ND83-2"/>
    <property type="nucleotide sequence ID" value="NM_144595.4"/>
</dbReference>
<dbReference type="RefSeq" id="XP_011533232.1">
    <property type="nucleotide sequence ID" value="XM_011534930.1"/>
</dbReference>
<dbReference type="SMR" id="Q8ND83"/>
<dbReference type="BioGRID" id="125759">
    <property type="interactions" value="100"/>
</dbReference>
<dbReference type="FunCoup" id="Q8ND83">
    <property type="interactions" value="308"/>
</dbReference>
<dbReference type="IntAct" id="Q8ND83">
    <property type="interactions" value="62"/>
</dbReference>
<dbReference type="STRING" id="9606.ENSP00000400921"/>
<dbReference type="GlyCosmos" id="Q8ND83">
    <property type="glycosylation" value="2 sites, 1 glycan"/>
</dbReference>
<dbReference type="GlyGen" id="Q8ND83">
    <property type="glycosylation" value="12 sites, 1 O-linked glycan (10 sites)"/>
</dbReference>
<dbReference type="iPTMnet" id="Q8ND83"/>
<dbReference type="MetOSite" id="Q8ND83"/>
<dbReference type="PhosphoSitePlus" id="Q8ND83"/>
<dbReference type="BioMuta" id="SLAIN1"/>
<dbReference type="DMDM" id="166977707"/>
<dbReference type="jPOST" id="Q8ND83"/>
<dbReference type="MassIVE" id="Q8ND83"/>
<dbReference type="PaxDb" id="9606-ENSP00000400921"/>
<dbReference type="PeptideAtlas" id="Q8ND83"/>
<dbReference type="ProteomicsDB" id="72988">
    <molecule id="Q8ND83-1"/>
</dbReference>
<dbReference type="ProteomicsDB" id="72989">
    <molecule id="Q8ND83-2"/>
</dbReference>
<dbReference type="ProteomicsDB" id="72990">
    <molecule id="Q8ND83-3"/>
</dbReference>
<dbReference type="ProteomicsDB" id="72991">
    <molecule id="Q8ND83-4"/>
</dbReference>
<dbReference type="Pumba" id="Q8ND83"/>
<dbReference type="TopDownProteomics" id="Q8ND83-1">
    <molecule id="Q8ND83-1"/>
</dbReference>
<dbReference type="Antibodypedia" id="24633">
    <property type="antibodies" value="146 antibodies from 27 providers"/>
</dbReference>
<dbReference type="DNASU" id="122060"/>
<dbReference type="Ensembl" id="ENST00000314070.9">
    <molecule id="Q8ND83-3"/>
    <property type="protein sequence ID" value="ENSP00000314443.5"/>
    <property type="gene ID" value="ENSG00000139737.23"/>
</dbReference>
<dbReference type="Ensembl" id="ENST00000358679.3">
    <molecule id="Q8ND83-2"/>
    <property type="protein sequence ID" value="ENSP00000351507.2"/>
    <property type="gene ID" value="ENSG00000139737.23"/>
</dbReference>
<dbReference type="Ensembl" id="ENST00000466548.5">
    <molecule id="Q8ND83-1"/>
    <property type="protein sequence ID" value="ENSP00000419730.1"/>
    <property type="gene ID" value="ENSG00000139737.23"/>
</dbReference>
<dbReference type="Ensembl" id="ENST00000488699.5">
    <molecule id="Q8ND83-4"/>
    <property type="protein sequence ID" value="ENSP00000418707.1"/>
    <property type="gene ID" value="ENSG00000139737.23"/>
</dbReference>
<dbReference type="GeneID" id="122060"/>
<dbReference type="KEGG" id="hsa:122060"/>
<dbReference type="UCSC" id="uc001vkm.3">
    <molecule id="Q8ND83-1"/>
    <property type="organism name" value="human"/>
</dbReference>
<dbReference type="AGR" id="HGNC:26387"/>
<dbReference type="CTD" id="122060"/>
<dbReference type="DisGeNET" id="122060"/>
<dbReference type="GeneCards" id="SLAIN1"/>
<dbReference type="HGNC" id="HGNC:26387">
    <property type="gene designation" value="SLAIN1"/>
</dbReference>
<dbReference type="HPA" id="ENSG00000139737">
    <property type="expression patterns" value="Tissue enriched (brain)"/>
</dbReference>
<dbReference type="MIM" id="610491">
    <property type="type" value="gene"/>
</dbReference>
<dbReference type="neXtProt" id="NX_Q8ND83"/>
<dbReference type="OpenTargets" id="ENSG00000139737"/>
<dbReference type="PharmGKB" id="PA162403440"/>
<dbReference type="VEuPathDB" id="HostDB:ENSG00000139737"/>
<dbReference type="eggNOG" id="ENOG502QVWF">
    <property type="taxonomic scope" value="Eukaryota"/>
</dbReference>
<dbReference type="GeneTree" id="ENSGT00390000017860"/>
<dbReference type="HOGENOM" id="CLU_027278_1_0_1"/>
<dbReference type="InParanoid" id="Q8ND83"/>
<dbReference type="OrthoDB" id="8819875at2759"/>
<dbReference type="PAN-GO" id="Q8ND83">
    <property type="GO annotations" value="4 GO annotations based on evolutionary models"/>
</dbReference>
<dbReference type="PhylomeDB" id="Q8ND83"/>
<dbReference type="TreeFam" id="TF331616"/>
<dbReference type="PathwayCommons" id="Q8ND83"/>
<dbReference type="SignaLink" id="Q8ND83"/>
<dbReference type="BioGRID-ORCS" id="122060">
    <property type="hits" value="9 hits in 1144 CRISPR screens"/>
</dbReference>
<dbReference type="ChiTaRS" id="SLAIN1">
    <property type="organism name" value="human"/>
</dbReference>
<dbReference type="GenomeRNAi" id="122060"/>
<dbReference type="Pharos" id="Q8ND83">
    <property type="development level" value="Tbio"/>
</dbReference>
<dbReference type="PRO" id="PR:Q8ND83"/>
<dbReference type="Proteomes" id="UP000005640">
    <property type="component" value="Chromosome 13"/>
</dbReference>
<dbReference type="RNAct" id="Q8ND83">
    <property type="molecule type" value="protein"/>
</dbReference>
<dbReference type="Bgee" id="ENSG00000139737">
    <property type="expression patterns" value="Expressed in C1 segment of cervical spinal cord and 146 other cell types or tissues"/>
</dbReference>
<dbReference type="ExpressionAtlas" id="Q8ND83">
    <property type="expression patterns" value="baseline and differential"/>
</dbReference>
<dbReference type="GO" id="GO:0005737">
    <property type="term" value="C:cytoplasm"/>
    <property type="evidence" value="ECO:0007669"/>
    <property type="project" value="UniProtKB-KW"/>
</dbReference>
<dbReference type="GO" id="GO:0005856">
    <property type="term" value="C:cytoskeleton"/>
    <property type="evidence" value="ECO:0007669"/>
    <property type="project" value="UniProtKB-SubCell"/>
</dbReference>
<dbReference type="GO" id="GO:0031122">
    <property type="term" value="P:cytoplasmic microtubule organization"/>
    <property type="evidence" value="ECO:0000318"/>
    <property type="project" value="GO_Central"/>
</dbReference>
<dbReference type="GO" id="GO:0007020">
    <property type="term" value="P:microtubule nucleation"/>
    <property type="evidence" value="ECO:0000318"/>
    <property type="project" value="GO_Central"/>
</dbReference>
<dbReference type="GO" id="GO:0031116">
    <property type="term" value="P:positive regulation of microtubule polymerization"/>
    <property type="evidence" value="ECO:0000318"/>
    <property type="project" value="GO_Central"/>
</dbReference>
<dbReference type="InterPro" id="IPR026179">
    <property type="entry name" value="Slain"/>
</dbReference>
<dbReference type="PANTHER" id="PTHR22406">
    <property type="entry name" value="NASCENT POLYPEPTIDE-ASSOCIATED COMPLEX SUBUNIT ALPHA, MUSCLE-SPECIFIC FORM"/>
    <property type="match status" value="1"/>
</dbReference>
<dbReference type="PANTHER" id="PTHR22406:SF2">
    <property type="entry name" value="SLAIN MOTIF-CONTAINING PROTEIN 1"/>
    <property type="match status" value="1"/>
</dbReference>
<dbReference type="Pfam" id="PF15301">
    <property type="entry name" value="SLAIN"/>
    <property type="match status" value="2"/>
</dbReference>
<name>SLAI1_HUMAN</name>
<gene>
    <name type="primary">SLAIN1</name>
    <name type="synonym">C13orf32</name>
</gene>
<keyword id="KW-0025">Alternative splicing</keyword>
<keyword id="KW-0175">Coiled coil</keyword>
<keyword id="KW-0963">Cytoplasm</keyword>
<keyword id="KW-0206">Cytoskeleton</keyword>
<keyword id="KW-0488">Methylation</keyword>
<keyword id="KW-0597">Phosphoprotein</keyword>
<keyword id="KW-1267">Proteomics identification</keyword>
<keyword id="KW-1185">Reference proteome</keyword>
<comment type="function">
    <text evidence="5">Microtubule plus-end tracking protein that might be involved in the regulation of cytoplasmic microtubule dynamics, microtubule organization and microtubule elongation.</text>
</comment>
<comment type="subunit">
    <text evidence="5 6">Interacts with MAPRE1, MAPRE2, MAPRE3 and CKAP5 (PubMed:21646404). Interacts with ZDHHC17 (via ANK repeats) (PubMed:28882895).</text>
</comment>
<comment type="interaction">
    <interactant intactId="EBI-10269374">
        <id>Q8ND83</id>
    </interactant>
    <interactant intactId="EBI-8643161">
        <id>Q9NX04</id>
        <label>AIRIM</label>
    </interactant>
    <organismsDiffer>false</organismsDiffer>
    <experiments>3</experiments>
</comment>
<comment type="interaction">
    <interactant intactId="EBI-10269374">
        <id>Q8ND83</id>
    </interactant>
    <interactant intactId="EBI-602199">
        <id>Q12774</id>
        <label>ARHGEF5</label>
    </interactant>
    <organismsDiffer>false</organismsDiffer>
    <experiments>3</experiments>
</comment>
<comment type="interaction">
    <interactant intactId="EBI-10269374">
        <id>Q8ND83</id>
    </interactant>
    <interactant intactId="EBI-742909">
        <id>Q9H6L4</id>
        <label>ARMC7</label>
    </interactant>
    <organismsDiffer>false</organismsDiffer>
    <experiments>3</experiments>
</comment>
<comment type="interaction">
    <interactant intactId="EBI-10269374">
        <id>Q8ND83</id>
    </interactant>
    <interactant intactId="EBI-745689">
        <id>Q7L5A3</id>
        <label>ATOSB</label>
    </interactant>
    <organismsDiffer>false</organismsDiffer>
    <experiments>3</experiments>
</comment>
<comment type="interaction">
    <interactant intactId="EBI-10269374">
        <id>Q8ND83</id>
    </interactant>
    <interactant intactId="EBI-11530605">
        <id>Q9H257-2</id>
        <label>CARD9</label>
    </interactant>
    <organismsDiffer>false</organismsDiffer>
    <experiments>3</experiments>
</comment>
<comment type="interaction">
    <interactant intactId="EBI-10269374">
        <id>Q8ND83</id>
    </interactant>
    <interactant intactId="EBI-1053725">
        <id>P10606</id>
        <label>COX5B</label>
    </interactant>
    <organismsDiffer>false</organismsDiffer>
    <experiments>3</experiments>
</comment>
<comment type="interaction">
    <interactant intactId="EBI-10269374">
        <id>Q8ND83</id>
    </interactant>
    <interactant intactId="EBI-739773">
        <id>Q9BSW2</id>
        <label>CRACR2A</label>
    </interactant>
    <organismsDiffer>false</organismsDiffer>
    <experiments>3</experiments>
</comment>
<comment type="interaction">
    <interactant intactId="EBI-10269374">
        <id>Q8ND83</id>
    </interactant>
    <interactant intactId="EBI-351257">
        <id>P26196</id>
        <label>DDX6</label>
    </interactant>
    <organismsDiffer>false</organismsDiffer>
    <experiments>3</experiments>
</comment>
<comment type="interaction">
    <interactant intactId="EBI-10269374">
        <id>Q8ND83</id>
    </interactant>
    <interactant intactId="EBI-743105">
        <id>Q5JVL4</id>
        <label>EFHC1</label>
    </interactant>
    <organismsDiffer>false</organismsDiffer>
    <experiments>3</experiments>
</comment>
<comment type="interaction">
    <interactant intactId="EBI-10269374">
        <id>Q8ND83</id>
    </interactant>
    <interactant intactId="EBI-371922">
        <id>Q96B26</id>
        <label>EXOSC8</label>
    </interactant>
    <organismsDiffer>false</organismsDiffer>
    <experiments>3</experiments>
</comment>
<comment type="interaction">
    <interactant intactId="EBI-10269374">
        <id>Q8ND83</id>
    </interactant>
    <interactant intactId="EBI-701903">
        <id>Q14192</id>
        <label>FHL2</label>
    </interactant>
    <organismsDiffer>false</organismsDiffer>
    <experiments>3</experiments>
</comment>
<comment type="interaction">
    <interactant intactId="EBI-10269374">
        <id>Q8ND83</id>
    </interactant>
    <interactant intactId="EBI-741101">
        <id>Q13643</id>
        <label>FHL3</label>
    </interactant>
    <organismsDiffer>false</organismsDiffer>
    <experiments>6</experiments>
</comment>
<comment type="interaction">
    <interactant intactId="EBI-10269374">
        <id>Q8ND83</id>
    </interactant>
    <interactant intactId="EBI-725515">
        <id>O43559</id>
        <label>FRS3</label>
    </interactant>
    <organismsDiffer>false</organismsDiffer>
    <experiments>3</experiments>
</comment>
<comment type="interaction">
    <interactant intactId="EBI-10269374">
        <id>Q8ND83</id>
    </interactant>
    <interactant intactId="EBI-6164177">
        <id>Q92805</id>
        <label>GOLGA1</label>
    </interactant>
    <organismsDiffer>false</organismsDiffer>
    <experiments>3</experiments>
</comment>
<comment type="interaction">
    <interactant intactId="EBI-10269374">
        <id>Q8ND83</id>
    </interactant>
    <interactant intactId="EBI-352986">
        <id>P52597</id>
        <label>HNRNPF</label>
    </interactant>
    <organismsDiffer>false</organismsDiffer>
    <experiments>3</experiments>
</comment>
<comment type="interaction">
    <interactant intactId="EBI-10269374">
        <id>Q8ND83</id>
    </interactant>
    <interactant intactId="EBI-748420">
        <id>Q9NSC5</id>
        <label>HOMER3</label>
    </interactant>
    <organismsDiffer>false</organismsDiffer>
    <experiments>3</experiments>
</comment>
<comment type="interaction">
    <interactant intactId="EBI-10269374">
        <id>Q8ND83</id>
    </interactant>
    <interactant intactId="EBI-1752118">
        <id>P31273</id>
        <label>HOXC8</label>
    </interactant>
    <organismsDiffer>false</organismsDiffer>
    <experiments>3</experiments>
</comment>
<comment type="interaction">
    <interactant intactId="EBI-10269374">
        <id>Q8ND83</id>
    </interactant>
    <interactant intactId="EBI-7116203">
        <id>O75031</id>
        <label>HSF2BP</label>
    </interactant>
    <organismsDiffer>false</organismsDiffer>
    <experiments>3</experiments>
</comment>
<comment type="interaction">
    <interactant intactId="EBI-10269374">
        <id>Q8ND83</id>
    </interactant>
    <interactant intactId="EBI-4397613">
        <id>Q7L273</id>
        <label>KCTD9</label>
    </interactant>
    <organismsDiffer>false</organismsDiffer>
    <experiments>3</experiments>
</comment>
<comment type="interaction">
    <interactant intactId="EBI-10269374">
        <id>Q8ND83</id>
    </interactant>
    <interactant intactId="EBI-8472129">
        <id>Q9HAQ2</id>
        <label>KIF9</label>
    </interactant>
    <organismsDiffer>false</organismsDiffer>
    <experiments>3</experiments>
</comment>
<comment type="interaction">
    <interactant intactId="EBI-10269374">
        <id>Q8ND83</id>
    </interactant>
    <interactant intactId="EBI-11742507">
        <id>Q8TAP4-4</id>
        <label>LMO3</label>
    </interactant>
    <organismsDiffer>false</organismsDiffer>
    <experiments>3</experiments>
</comment>
<comment type="interaction">
    <interactant intactId="EBI-10269374">
        <id>Q8ND83</id>
    </interactant>
    <interactant intactId="EBI-741158">
        <id>Q96HA8</id>
        <label>NTAQ1</label>
    </interactant>
    <organismsDiffer>false</organismsDiffer>
    <experiments>3</experiments>
</comment>
<comment type="interaction">
    <interactant intactId="EBI-10269374">
        <id>Q8ND83</id>
    </interactant>
    <interactant intactId="EBI-398874">
        <id>Q9UBU9</id>
        <label>NXF1</label>
    </interactant>
    <organismsDiffer>false</organismsDiffer>
    <experiments>3</experiments>
</comment>
<comment type="interaction">
    <interactant intactId="EBI-10269374">
        <id>Q8ND83</id>
    </interactant>
    <interactant intactId="EBI-11022007">
        <id>Q9HBE1-4</id>
        <label>PATZ1</label>
    </interactant>
    <organismsDiffer>false</organismsDiffer>
    <experiments>3</experiments>
</comment>
<comment type="interaction">
    <interactant intactId="EBI-10269374">
        <id>Q8ND83</id>
    </interactant>
    <interactant intactId="EBI-12111000">
        <id>P55771</id>
        <label>PAX9</label>
    </interactant>
    <organismsDiffer>false</organismsDiffer>
    <experiments>3</experiments>
</comment>
<comment type="interaction">
    <interactant intactId="EBI-10269374">
        <id>Q8ND83</id>
    </interactant>
    <interactant intactId="EBI-350517">
        <id>Q9NR12</id>
        <label>PDLIM7</label>
    </interactant>
    <organismsDiffer>false</organismsDiffer>
    <experiments>3</experiments>
</comment>
<comment type="interaction">
    <interactant intactId="EBI-10269374">
        <id>Q8ND83</id>
    </interactant>
    <interactant intactId="EBI-357275">
        <id>Q99471</id>
        <label>PFDN5</label>
    </interactant>
    <organismsDiffer>false</organismsDiffer>
    <experiments>3</experiments>
</comment>
<comment type="interaction">
    <interactant intactId="EBI-10269374">
        <id>Q8ND83</id>
    </interactant>
    <interactant intactId="EBI-1567797">
        <id>Q8WWY3</id>
        <label>PRPF31</label>
    </interactant>
    <organismsDiffer>false</organismsDiffer>
    <experiments>3</experiments>
</comment>
<comment type="interaction">
    <interactant intactId="EBI-10269374">
        <id>Q8ND83</id>
    </interactant>
    <interactant intactId="EBI-348380">
        <id>P25788</id>
        <label>PSMA3</label>
    </interactant>
    <organismsDiffer>false</organismsDiffer>
    <experiments>3</experiments>
</comment>
<comment type="interaction">
    <interactant intactId="EBI-10269374">
        <id>Q8ND83</id>
    </interactant>
    <interactant intactId="EBI-10188956">
        <id>O75679</id>
        <label>RFPL3</label>
    </interactant>
    <organismsDiffer>false</organismsDiffer>
    <experiments>5</experiments>
</comment>
<comment type="interaction">
    <interactant intactId="EBI-10269374">
        <id>Q8ND83</id>
    </interactant>
    <interactant intactId="EBI-12000762">
        <id>Q7Z5V6-2</id>
        <label>SAXO4</label>
    </interactant>
    <organismsDiffer>false</organismsDiffer>
    <experiments>3</experiments>
</comment>
<comment type="interaction">
    <interactant intactId="EBI-10269374">
        <id>Q8ND83</id>
    </interactant>
    <interactant intactId="EBI-8787464">
        <id>Q9NU19</id>
        <label>TBC1D22B</label>
    </interactant>
    <organismsDiffer>false</organismsDiffer>
    <experiments>3</experiments>
</comment>
<comment type="interaction">
    <interactant intactId="EBI-10269374">
        <id>Q8ND83</id>
    </interactant>
    <interactant intactId="EBI-11952651">
        <id>Q7Z6R9</id>
        <label>TFAP2D</label>
    </interactant>
    <organismsDiffer>false</organismsDiffer>
    <experiments>3</experiments>
</comment>
<comment type="interaction">
    <interactant intactId="EBI-10269374">
        <id>Q8ND83</id>
    </interactant>
    <interactant intactId="EBI-3918381">
        <id>Q96PN8</id>
        <label>TSSK3</label>
    </interactant>
    <organismsDiffer>false</organismsDiffer>
    <experiments>3</experiments>
</comment>
<comment type="interaction">
    <interactant intactId="EBI-10269374">
        <id>Q8ND83</id>
    </interactant>
    <interactant intactId="EBI-7254550">
        <id>P36508</id>
        <label>ZNF76</label>
    </interactant>
    <organismsDiffer>false</organismsDiffer>
    <experiments>3</experiments>
</comment>
<comment type="subcellular location">
    <subcellularLocation>
        <location evidence="5">Cytoplasm</location>
        <location evidence="5">Cytoskeleton</location>
    </subcellularLocation>
    <text evidence="5">Colocalizes with microtubules. Detected at the plus end of growing microtubules.</text>
</comment>
<comment type="alternative products">
    <event type="alternative splicing"/>
    <isoform>
        <id>Q8ND83-1</id>
        <name>1</name>
        <sequence type="displayed"/>
    </isoform>
    <isoform>
        <id>Q8ND83-2</id>
        <name>2</name>
        <sequence type="described" ref="VSP_030832"/>
    </isoform>
    <isoform>
        <id>Q8ND83-3</id>
        <name>3</name>
        <sequence type="described" ref="VSP_030832 VSP_043256 VSP_043257"/>
    </isoform>
    <isoform>
        <id>Q8ND83-4</id>
        <name>4</name>
        <sequence type="described" ref="VSP_054118"/>
    </isoform>
</comment>
<comment type="tissue specificity">
    <text evidence="4 5">Expressed in embryonic stem cells (PubMed:16546155). Expressed in brain (PubMed:21646404).</text>
</comment>
<comment type="similarity">
    <text evidence="9">Belongs to the SLAIN motif-containing family.</text>
</comment>
<comment type="sequence caution" evidence="9">
    <conflict type="erroneous initiation">
        <sequence resource="EMBL-CDS" id="AAI11498"/>
    </conflict>
</comment>
<comment type="sequence caution" evidence="9">
    <conflict type="erroneous initiation">
        <sequence resource="EMBL-CDS" id="CAD39000"/>
    </conflict>
</comment>
<accession>Q8ND83</accession>
<accession>A8K0Z9</accession>
<accession>B7Z209</accession>
<accession>Q5T6P4</accession>
<accession>Q5T6P7</accession>
<accession>Q8ND10</accession>
<accession>Q96NV0</accession>
<protein>
    <recommendedName>
        <fullName>SLAIN motif-containing protein 1</fullName>
    </recommendedName>
</protein>
<reference key="1">
    <citation type="journal article" date="2004" name="Nat. Genet.">
        <title>Complete sequencing and characterization of 21,243 full-length human cDNAs.</title>
        <authorList>
            <person name="Ota T."/>
            <person name="Suzuki Y."/>
            <person name="Nishikawa T."/>
            <person name="Otsuki T."/>
            <person name="Sugiyama T."/>
            <person name="Irie R."/>
            <person name="Wakamatsu A."/>
            <person name="Hayashi K."/>
            <person name="Sato H."/>
            <person name="Nagai K."/>
            <person name="Kimura K."/>
            <person name="Makita H."/>
            <person name="Sekine M."/>
            <person name="Obayashi M."/>
            <person name="Nishi T."/>
            <person name="Shibahara T."/>
            <person name="Tanaka T."/>
            <person name="Ishii S."/>
            <person name="Yamamoto J."/>
            <person name="Saito K."/>
            <person name="Kawai Y."/>
            <person name="Isono Y."/>
            <person name="Nakamura Y."/>
            <person name="Nagahari K."/>
            <person name="Murakami K."/>
            <person name="Yasuda T."/>
            <person name="Iwayanagi T."/>
            <person name="Wagatsuma M."/>
            <person name="Shiratori A."/>
            <person name="Sudo H."/>
            <person name="Hosoiri T."/>
            <person name="Kaku Y."/>
            <person name="Kodaira H."/>
            <person name="Kondo H."/>
            <person name="Sugawara M."/>
            <person name="Takahashi M."/>
            <person name="Kanda K."/>
            <person name="Yokoi T."/>
            <person name="Furuya T."/>
            <person name="Kikkawa E."/>
            <person name="Omura Y."/>
            <person name="Abe K."/>
            <person name="Kamihara K."/>
            <person name="Katsuta N."/>
            <person name="Sato K."/>
            <person name="Tanikawa M."/>
            <person name="Yamazaki M."/>
            <person name="Ninomiya K."/>
            <person name="Ishibashi T."/>
            <person name="Yamashita H."/>
            <person name="Murakawa K."/>
            <person name="Fujimori K."/>
            <person name="Tanai H."/>
            <person name="Kimata M."/>
            <person name="Watanabe M."/>
            <person name="Hiraoka S."/>
            <person name="Chiba Y."/>
            <person name="Ishida S."/>
            <person name="Ono Y."/>
            <person name="Takiguchi S."/>
            <person name="Watanabe S."/>
            <person name="Yosida M."/>
            <person name="Hotuta T."/>
            <person name="Kusano J."/>
            <person name="Kanehori K."/>
            <person name="Takahashi-Fujii A."/>
            <person name="Hara H."/>
            <person name="Tanase T.-O."/>
            <person name="Nomura Y."/>
            <person name="Togiya S."/>
            <person name="Komai F."/>
            <person name="Hara R."/>
            <person name="Takeuchi K."/>
            <person name="Arita M."/>
            <person name="Imose N."/>
            <person name="Musashino K."/>
            <person name="Yuuki H."/>
            <person name="Oshima A."/>
            <person name="Sasaki N."/>
            <person name="Aotsuka S."/>
            <person name="Yoshikawa Y."/>
            <person name="Matsunawa H."/>
            <person name="Ichihara T."/>
            <person name="Shiohata N."/>
            <person name="Sano S."/>
            <person name="Moriya S."/>
            <person name="Momiyama H."/>
            <person name="Satoh N."/>
            <person name="Takami S."/>
            <person name="Terashima Y."/>
            <person name="Suzuki O."/>
            <person name="Nakagawa S."/>
            <person name="Senoh A."/>
            <person name="Mizoguchi H."/>
            <person name="Goto Y."/>
            <person name="Shimizu F."/>
            <person name="Wakebe H."/>
            <person name="Hishigaki H."/>
            <person name="Watanabe T."/>
            <person name="Sugiyama A."/>
            <person name="Takemoto M."/>
            <person name="Kawakami B."/>
            <person name="Yamazaki M."/>
            <person name="Watanabe K."/>
            <person name="Kumagai A."/>
            <person name="Itakura S."/>
            <person name="Fukuzumi Y."/>
            <person name="Fujimori Y."/>
            <person name="Komiyama M."/>
            <person name="Tashiro H."/>
            <person name="Tanigami A."/>
            <person name="Fujiwara T."/>
            <person name="Ono T."/>
            <person name="Yamada K."/>
            <person name="Fujii Y."/>
            <person name="Ozaki K."/>
            <person name="Hirao M."/>
            <person name="Ohmori Y."/>
            <person name="Kawabata A."/>
            <person name="Hikiji T."/>
            <person name="Kobatake N."/>
            <person name="Inagaki H."/>
            <person name="Ikema Y."/>
            <person name="Okamoto S."/>
            <person name="Okitani R."/>
            <person name="Kawakami T."/>
            <person name="Noguchi S."/>
            <person name="Itoh T."/>
            <person name="Shigeta K."/>
            <person name="Senba T."/>
            <person name="Matsumura K."/>
            <person name="Nakajima Y."/>
            <person name="Mizuno T."/>
            <person name="Morinaga M."/>
            <person name="Sasaki M."/>
            <person name="Togashi T."/>
            <person name="Oyama M."/>
            <person name="Hata H."/>
            <person name="Watanabe M."/>
            <person name="Komatsu T."/>
            <person name="Mizushima-Sugano J."/>
            <person name="Satoh T."/>
            <person name="Shirai Y."/>
            <person name="Takahashi Y."/>
            <person name="Nakagawa K."/>
            <person name="Okumura K."/>
            <person name="Nagase T."/>
            <person name="Nomura N."/>
            <person name="Kikuchi H."/>
            <person name="Masuho Y."/>
            <person name="Yamashita R."/>
            <person name="Nakai K."/>
            <person name="Yada T."/>
            <person name="Nakamura Y."/>
            <person name="Ohara O."/>
            <person name="Isogai T."/>
            <person name="Sugano S."/>
        </authorList>
    </citation>
    <scope>NUCLEOTIDE SEQUENCE [LARGE SCALE MRNA] (ISOFORMS 2; 3 AND 4)</scope>
    <source>
        <tissue>Amygdala</tissue>
        <tissue>Brain cortex</tissue>
    </source>
</reference>
<reference key="2">
    <citation type="journal article" date="2007" name="BMC Genomics">
        <title>The full-ORF clone resource of the German cDNA consortium.</title>
        <authorList>
            <person name="Bechtel S."/>
            <person name="Rosenfelder H."/>
            <person name="Duda A."/>
            <person name="Schmidt C.P."/>
            <person name="Ernst U."/>
            <person name="Wellenreuther R."/>
            <person name="Mehrle A."/>
            <person name="Schuster C."/>
            <person name="Bahr A."/>
            <person name="Bloecker H."/>
            <person name="Heubner D."/>
            <person name="Hoerlein A."/>
            <person name="Michel G."/>
            <person name="Wedler H."/>
            <person name="Koehrer K."/>
            <person name="Ottenwaelder B."/>
            <person name="Poustka A."/>
            <person name="Wiemann S."/>
            <person name="Schupp I."/>
        </authorList>
    </citation>
    <scope>NUCLEOTIDE SEQUENCE [LARGE SCALE MRNA] (ISOFORM 3)</scope>
    <scope>NUCLEOTIDE SEQUENCE [LARGE SCALE MRNA] OF 210-568 (ISOFORM 1)</scope>
    <source>
        <tissue>Testis</tissue>
    </source>
</reference>
<reference key="3">
    <citation type="journal article" date="2004" name="Nature">
        <title>The DNA sequence and analysis of human chromosome 13.</title>
        <authorList>
            <person name="Dunham A."/>
            <person name="Matthews L.H."/>
            <person name="Burton J."/>
            <person name="Ashurst J.L."/>
            <person name="Howe K.L."/>
            <person name="Ashcroft K.J."/>
            <person name="Beare D.M."/>
            <person name="Burford D.C."/>
            <person name="Hunt S.E."/>
            <person name="Griffiths-Jones S."/>
            <person name="Jones M.C."/>
            <person name="Keenan S.J."/>
            <person name="Oliver K."/>
            <person name="Scott C.E."/>
            <person name="Ainscough R."/>
            <person name="Almeida J.P."/>
            <person name="Ambrose K.D."/>
            <person name="Andrews D.T."/>
            <person name="Ashwell R.I.S."/>
            <person name="Babbage A.K."/>
            <person name="Bagguley C.L."/>
            <person name="Bailey J."/>
            <person name="Bannerjee R."/>
            <person name="Barlow K.F."/>
            <person name="Bates K."/>
            <person name="Beasley H."/>
            <person name="Bird C.P."/>
            <person name="Bray-Allen S."/>
            <person name="Brown A.J."/>
            <person name="Brown J.Y."/>
            <person name="Burrill W."/>
            <person name="Carder C."/>
            <person name="Carter N.P."/>
            <person name="Chapman J.C."/>
            <person name="Clamp M.E."/>
            <person name="Clark S.Y."/>
            <person name="Clarke G."/>
            <person name="Clee C.M."/>
            <person name="Clegg S.C."/>
            <person name="Cobley V."/>
            <person name="Collins J.E."/>
            <person name="Corby N."/>
            <person name="Coville G.J."/>
            <person name="Deloukas P."/>
            <person name="Dhami P."/>
            <person name="Dunham I."/>
            <person name="Dunn M."/>
            <person name="Earthrowl M.E."/>
            <person name="Ellington A.G."/>
            <person name="Faulkner L."/>
            <person name="Frankish A.G."/>
            <person name="Frankland J."/>
            <person name="French L."/>
            <person name="Garner P."/>
            <person name="Garnett J."/>
            <person name="Gilbert J.G.R."/>
            <person name="Gilson C.J."/>
            <person name="Ghori J."/>
            <person name="Grafham D.V."/>
            <person name="Gribble S.M."/>
            <person name="Griffiths C."/>
            <person name="Hall R.E."/>
            <person name="Hammond S."/>
            <person name="Harley J.L."/>
            <person name="Hart E.A."/>
            <person name="Heath P.D."/>
            <person name="Howden P.J."/>
            <person name="Huckle E.J."/>
            <person name="Hunt P.J."/>
            <person name="Hunt A.R."/>
            <person name="Johnson C."/>
            <person name="Johnson D."/>
            <person name="Kay M."/>
            <person name="Kimberley A.M."/>
            <person name="King A."/>
            <person name="Laird G.K."/>
            <person name="Langford C.J."/>
            <person name="Lawlor S."/>
            <person name="Leongamornlert D.A."/>
            <person name="Lloyd D.M."/>
            <person name="Lloyd C."/>
            <person name="Loveland J.E."/>
            <person name="Lovell J."/>
            <person name="Martin S."/>
            <person name="Mashreghi-Mohammadi M."/>
            <person name="McLaren S.J."/>
            <person name="McMurray A."/>
            <person name="Milne S."/>
            <person name="Moore M.J.F."/>
            <person name="Nickerson T."/>
            <person name="Palmer S.A."/>
            <person name="Pearce A.V."/>
            <person name="Peck A.I."/>
            <person name="Pelan S."/>
            <person name="Phillimore B."/>
            <person name="Porter K.M."/>
            <person name="Rice C.M."/>
            <person name="Searle S."/>
            <person name="Sehra H.K."/>
            <person name="Shownkeen R."/>
            <person name="Skuce C.D."/>
            <person name="Smith M."/>
            <person name="Steward C.A."/>
            <person name="Sycamore N."/>
            <person name="Tester J."/>
            <person name="Thomas D.W."/>
            <person name="Tracey A."/>
            <person name="Tromans A."/>
            <person name="Tubby B."/>
            <person name="Wall M."/>
            <person name="Wallis J.M."/>
            <person name="West A.P."/>
            <person name="Whitehead S.L."/>
            <person name="Willey D.L."/>
            <person name="Wilming L."/>
            <person name="Wray P.W."/>
            <person name="Wright M.W."/>
            <person name="Young L."/>
            <person name="Coulson A."/>
            <person name="Durbin R.M."/>
            <person name="Hubbard T."/>
            <person name="Sulston J.E."/>
            <person name="Beck S."/>
            <person name="Bentley D.R."/>
            <person name="Rogers J."/>
            <person name="Ross M.T."/>
        </authorList>
    </citation>
    <scope>NUCLEOTIDE SEQUENCE [LARGE SCALE GENOMIC DNA]</scope>
</reference>
<reference key="4">
    <citation type="journal article" date="2004" name="Genome Res.">
        <title>The status, quality, and expansion of the NIH full-length cDNA project: the Mammalian Gene Collection (MGC).</title>
        <authorList>
            <consortium name="The MGC Project Team"/>
        </authorList>
    </citation>
    <scope>NUCLEOTIDE SEQUENCE [LARGE SCALE MRNA] OF 211-568 (ISOFORM 1)</scope>
    <source>
        <tissue>Skin</tissue>
    </source>
</reference>
<reference key="5">
    <citation type="journal article" date="2006" name="Dev. Biol.">
        <title>Transcriptional profiling of mouse and human ES cells identifies SLAIN1, a novel stem cell gene.</title>
        <authorList>
            <person name="Hirst C.E."/>
            <person name="Ng E.S."/>
            <person name="Azzola L."/>
            <person name="Voss A.K."/>
            <person name="Thomas T."/>
            <person name="Stanley E.G."/>
            <person name="Elefanty A.G."/>
        </authorList>
    </citation>
    <scope>IDENTIFICATION</scope>
    <scope>TISSUE SPECIFICITY</scope>
</reference>
<reference key="6">
    <citation type="journal article" date="2009" name="Sci. Signal.">
        <title>Quantitative phosphoproteomic analysis of T cell receptor signaling reveals system-wide modulation of protein-protein interactions.</title>
        <authorList>
            <person name="Mayya V."/>
            <person name="Lundgren D.H."/>
            <person name="Hwang S.-I."/>
            <person name="Rezaul K."/>
            <person name="Wu L."/>
            <person name="Eng J.K."/>
            <person name="Rodionov V."/>
            <person name="Han D.K."/>
        </authorList>
    </citation>
    <scope>PHOSPHORYLATION [LARGE SCALE ANALYSIS] AT SER-243</scope>
    <scope>IDENTIFICATION BY MASS SPECTROMETRY [LARGE SCALE ANALYSIS]</scope>
    <source>
        <tissue>Leukemic T-cell</tissue>
    </source>
</reference>
<reference key="7">
    <citation type="journal article" date="2011" name="J. Cell Biol.">
        <title>SLAIN2 links microtubule plus end-tracking proteins and controls microtubule growth in interphase.</title>
        <authorList>
            <person name="van der Vaart B."/>
            <person name="Manatschal C."/>
            <person name="Grigoriev I."/>
            <person name="Olieric V."/>
            <person name="Gouveia S.M."/>
            <person name="Bjelic S."/>
            <person name="Demmers J."/>
            <person name="Vorobjev I."/>
            <person name="Hoogenraad C.C."/>
            <person name="Steinmetz M.O."/>
            <person name="Akhmanova A."/>
        </authorList>
    </citation>
    <scope>FUNCTION</scope>
    <scope>INTERACTION WITH MAPRE1; MAPRE2; MAPRE3 AND CKAP5</scope>
    <scope>SUBCELLULAR LOCATION</scope>
    <scope>TISSUE SPECIFICITY</scope>
</reference>
<reference key="8">
    <citation type="journal article" date="2017" name="J. Biol. Chem.">
        <title>Peptide array based screening reveals a large number of proteins interacting with the ankyrin repeat domain of the zDHHC17 S-acyltransferase.</title>
        <authorList>
            <person name="Lemonidis K."/>
            <person name="MacLeod R."/>
            <person name="Baillie G.S."/>
            <person name="Chamberlain L.H."/>
        </authorList>
    </citation>
    <scope>INTERACTION WITH ZDHHC17</scope>
</reference>
<sequence>MMAEQVKCASAGVSSGAGSGPVVNAELEVKKLQELVRKLEKQNEQLRSRAASAAAAPHLLLLPPPPPAAPPPAGLQPLGPRSPPAATATAAASGGLGPAFPGTFCLPSPAPSLLCSLAQPPEAPFVYFKPAAGFFGAGGGGPEPGGAGTPPGAAAAPPSPPPTLLDEVELLDLESVAAWRDEDDYTWLYIGSSKTFTSSEKSLTPLQWCRHVLDNPTPEMEAARRSLCFRLEQGYTSRGSPLSPQSSIDSELSTSELEDDSISMGYKLQDLTDVQIMARLQEESLRQDYASTSASVSRHSSSVSLSSGKKGTCSDQEYDQYSLEDEEEFDHLPPPQPRLPRCSPFQRGIPHSQTFSSIRECRRSPSSQYFPSNNYQQQQYYSPQAQTPDQQPNRTNGDKLRRSMPNLARMPSTTAISSNISSPVTVRNSQSFDSSLHGAGNGISRIQSCIPSPGQLQHRVHSVGHFPVSIRQPLKATAYVSPTVQGSSNMPLSNGLQLYSNTGIPTPNKAAASGIMGRSALPRPSLAINGSNLPRSKIAQPVRSFLQPPKPLSSLSTLRDGNWRDGCY</sequence>